<proteinExistence type="inferred from homology"/>
<name>RR7_DRANE</name>
<organism>
    <name type="scientific">Draba nemorosa</name>
    <name type="common">Woodland whitlowgrass</name>
    <dbReference type="NCBI Taxonomy" id="171822"/>
    <lineage>
        <taxon>Eukaryota</taxon>
        <taxon>Viridiplantae</taxon>
        <taxon>Streptophyta</taxon>
        <taxon>Embryophyta</taxon>
        <taxon>Tracheophyta</taxon>
        <taxon>Spermatophyta</taxon>
        <taxon>Magnoliopsida</taxon>
        <taxon>eudicotyledons</taxon>
        <taxon>Gunneridae</taxon>
        <taxon>Pentapetalae</taxon>
        <taxon>rosids</taxon>
        <taxon>malvids</taxon>
        <taxon>Brassicales</taxon>
        <taxon>Brassicaceae</taxon>
        <taxon>Arabideae</taxon>
        <taxon>Draba</taxon>
    </lineage>
</organism>
<feature type="chain" id="PRO_0000344338" description="Small ribosomal subunit protein uS7cz/uS7cy">
    <location>
        <begin position="1"/>
        <end position="155"/>
    </location>
</feature>
<geneLocation type="chloroplast"/>
<evidence type="ECO:0000250" key="1"/>
<evidence type="ECO:0000255" key="2">
    <source>
        <dbReference type="HAMAP-Rule" id="MF_00480"/>
    </source>
</evidence>
<evidence type="ECO:0000305" key="3"/>
<reference key="1">
    <citation type="submission" date="2007-03" db="EMBL/GenBank/DDBJ databases">
        <title>Sequencing analysis of Draba nemoroza chloroplast DNA.</title>
        <authorList>
            <person name="Hosouchi T."/>
            <person name="Tsuruoka H."/>
            <person name="Kotani H."/>
        </authorList>
    </citation>
    <scope>NUCLEOTIDE SEQUENCE [LARGE SCALE GENOMIC DNA]</scope>
</reference>
<protein>
    <recommendedName>
        <fullName evidence="2">Small ribosomal subunit protein uS7cz/uS7cy</fullName>
    </recommendedName>
    <alternativeName>
        <fullName>30S ribosomal protein S7, chloroplastic</fullName>
    </alternativeName>
</protein>
<gene>
    <name type="primary">rps7-A</name>
</gene>
<gene>
    <name type="primary">rps7-B</name>
</gene>
<sequence>MSRRGTAEEKTAKSDPIYRNRLVNMLVNRILKHGKKSLAYQIIYRALKKIQQKTETNPLSVLRQAIRGVTPDIAVKARRVGGSTHQVPIEIGSTQGKALAIRWLLGASRKRPGRNMAFKLSSELVDAAKGSGDAIRKKEETHRMAEANRAFAHFR</sequence>
<comment type="function">
    <text evidence="1">One of the primary rRNA binding proteins, it binds directly to 16S rRNA where it nucleates assembly of the head domain of the 30S subunit.</text>
</comment>
<comment type="subunit">
    <text evidence="1">Part of the 30S ribosomal subunit.</text>
</comment>
<comment type="subcellular location">
    <subcellularLocation>
        <location>Plastid</location>
        <location>Chloroplast</location>
    </subcellularLocation>
</comment>
<comment type="similarity">
    <text evidence="3">Belongs to the universal ribosomal protein uS7 family.</text>
</comment>
<keyword id="KW-0150">Chloroplast</keyword>
<keyword id="KW-0934">Plastid</keyword>
<keyword id="KW-0687">Ribonucleoprotein</keyword>
<keyword id="KW-0689">Ribosomal protein</keyword>
<keyword id="KW-0694">RNA-binding</keyword>
<keyword id="KW-0699">rRNA-binding</keyword>
<accession>A4QL65</accession>
<dbReference type="EMBL" id="AP009373">
    <property type="protein sequence ID" value="BAF50420.1"/>
    <property type="molecule type" value="Genomic_DNA"/>
</dbReference>
<dbReference type="EMBL" id="AP009373">
    <property type="protein sequence ID" value="BAF50435.1"/>
    <property type="molecule type" value="Genomic_DNA"/>
</dbReference>
<dbReference type="SMR" id="A4QL65"/>
<dbReference type="GO" id="GO:0009507">
    <property type="term" value="C:chloroplast"/>
    <property type="evidence" value="ECO:0007669"/>
    <property type="project" value="UniProtKB-SubCell"/>
</dbReference>
<dbReference type="GO" id="GO:0015935">
    <property type="term" value="C:small ribosomal subunit"/>
    <property type="evidence" value="ECO:0007669"/>
    <property type="project" value="InterPro"/>
</dbReference>
<dbReference type="GO" id="GO:0019843">
    <property type="term" value="F:rRNA binding"/>
    <property type="evidence" value="ECO:0007669"/>
    <property type="project" value="UniProtKB-UniRule"/>
</dbReference>
<dbReference type="GO" id="GO:0003735">
    <property type="term" value="F:structural constituent of ribosome"/>
    <property type="evidence" value="ECO:0007669"/>
    <property type="project" value="InterPro"/>
</dbReference>
<dbReference type="GO" id="GO:0006412">
    <property type="term" value="P:translation"/>
    <property type="evidence" value="ECO:0007669"/>
    <property type="project" value="UniProtKB-UniRule"/>
</dbReference>
<dbReference type="CDD" id="cd14871">
    <property type="entry name" value="uS7_Chloroplast"/>
    <property type="match status" value="1"/>
</dbReference>
<dbReference type="FunFam" id="1.10.455.10:FF:000001">
    <property type="entry name" value="30S ribosomal protein S7"/>
    <property type="match status" value="1"/>
</dbReference>
<dbReference type="Gene3D" id="1.10.455.10">
    <property type="entry name" value="Ribosomal protein S7 domain"/>
    <property type="match status" value="1"/>
</dbReference>
<dbReference type="HAMAP" id="MF_00480_B">
    <property type="entry name" value="Ribosomal_uS7_B"/>
    <property type="match status" value="1"/>
</dbReference>
<dbReference type="InterPro" id="IPR000235">
    <property type="entry name" value="Ribosomal_uS7"/>
</dbReference>
<dbReference type="InterPro" id="IPR005717">
    <property type="entry name" value="Ribosomal_uS7_bac/org-type"/>
</dbReference>
<dbReference type="InterPro" id="IPR020606">
    <property type="entry name" value="Ribosomal_uS7_CS"/>
</dbReference>
<dbReference type="InterPro" id="IPR023798">
    <property type="entry name" value="Ribosomal_uS7_dom"/>
</dbReference>
<dbReference type="InterPro" id="IPR036823">
    <property type="entry name" value="Ribosomal_uS7_dom_sf"/>
</dbReference>
<dbReference type="NCBIfam" id="TIGR01029">
    <property type="entry name" value="rpsG_bact"/>
    <property type="match status" value="1"/>
</dbReference>
<dbReference type="PANTHER" id="PTHR11205">
    <property type="entry name" value="RIBOSOMAL PROTEIN S7"/>
    <property type="match status" value="1"/>
</dbReference>
<dbReference type="Pfam" id="PF00177">
    <property type="entry name" value="Ribosomal_S7"/>
    <property type="match status" value="1"/>
</dbReference>
<dbReference type="PIRSF" id="PIRSF002122">
    <property type="entry name" value="RPS7p_RPS7a_RPS5e_RPS7o"/>
    <property type="match status" value="1"/>
</dbReference>
<dbReference type="SUPFAM" id="SSF47973">
    <property type="entry name" value="Ribosomal protein S7"/>
    <property type="match status" value="1"/>
</dbReference>
<dbReference type="PROSITE" id="PS00052">
    <property type="entry name" value="RIBOSOMAL_S7"/>
    <property type="match status" value="1"/>
</dbReference>